<keyword id="KW-0143">Chaperone</keyword>
<keyword id="KW-0963">Cytoplasm</keyword>
<keyword id="KW-1185">Reference proteome</keyword>
<keyword id="KW-0690">Ribosome biogenesis</keyword>
<keyword id="KW-0698">rRNA processing</keyword>
<sequence>MELVVGRVAKSHGVRGELVVEVRTDDPDARFAEGTVLRGRLPRSTEVREFTVESAREHSGRLLVSLAGVDDRSAADALRGTLFVVDSAELPPSDDPDEFYDHELEGLSVRDTAGAVLGTVTEVLHSAAGELLSMRAAEDGREILIPFVTAIVPTVSVAEGYVVIDPPEGLLDPE</sequence>
<organism>
    <name type="scientific">Nocardia farcinica (strain IFM 10152)</name>
    <dbReference type="NCBI Taxonomy" id="247156"/>
    <lineage>
        <taxon>Bacteria</taxon>
        <taxon>Bacillati</taxon>
        <taxon>Actinomycetota</taxon>
        <taxon>Actinomycetes</taxon>
        <taxon>Mycobacteriales</taxon>
        <taxon>Nocardiaceae</taxon>
        <taxon>Nocardia</taxon>
    </lineage>
</organism>
<dbReference type="EMBL" id="AP006618">
    <property type="protein sequence ID" value="BAD59004.1"/>
    <property type="molecule type" value="Genomic_DNA"/>
</dbReference>
<dbReference type="RefSeq" id="WP_011210689.1">
    <property type="nucleotide sequence ID" value="NC_006361.1"/>
</dbReference>
<dbReference type="SMR" id="Q5YS37"/>
<dbReference type="STRING" id="247156.NFA_41550"/>
<dbReference type="GeneID" id="61134791"/>
<dbReference type="KEGG" id="nfa:NFA_41550"/>
<dbReference type="eggNOG" id="COG0806">
    <property type="taxonomic scope" value="Bacteria"/>
</dbReference>
<dbReference type="HOGENOM" id="CLU_077636_0_0_11"/>
<dbReference type="OrthoDB" id="5381335at2"/>
<dbReference type="Proteomes" id="UP000006820">
    <property type="component" value="Chromosome"/>
</dbReference>
<dbReference type="GO" id="GO:0005737">
    <property type="term" value="C:cytoplasm"/>
    <property type="evidence" value="ECO:0007669"/>
    <property type="project" value="UniProtKB-SubCell"/>
</dbReference>
<dbReference type="GO" id="GO:0005840">
    <property type="term" value="C:ribosome"/>
    <property type="evidence" value="ECO:0007669"/>
    <property type="project" value="InterPro"/>
</dbReference>
<dbReference type="GO" id="GO:0043022">
    <property type="term" value="F:ribosome binding"/>
    <property type="evidence" value="ECO:0007669"/>
    <property type="project" value="InterPro"/>
</dbReference>
<dbReference type="GO" id="GO:0042274">
    <property type="term" value="P:ribosomal small subunit biogenesis"/>
    <property type="evidence" value="ECO:0007669"/>
    <property type="project" value="UniProtKB-UniRule"/>
</dbReference>
<dbReference type="GO" id="GO:0006364">
    <property type="term" value="P:rRNA processing"/>
    <property type="evidence" value="ECO:0007669"/>
    <property type="project" value="UniProtKB-UniRule"/>
</dbReference>
<dbReference type="Gene3D" id="2.30.30.240">
    <property type="entry name" value="PRC-barrel domain"/>
    <property type="match status" value="1"/>
</dbReference>
<dbReference type="Gene3D" id="2.40.30.60">
    <property type="entry name" value="RimM"/>
    <property type="match status" value="1"/>
</dbReference>
<dbReference type="HAMAP" id="MF_00014">
    <property type="entry name" value="Ribosome_mat_RimM"/>
    <property type="match status" value="1"/>
</dbReference>
<dbReference type="InterPro" id="IPR011033">
    <property type="entry name" value="PRC_barrel-like_sf"/>
</dbReference>
<dbReference type="InterPro" id="IPR056792">
    <property type="entry name" value="PRC_RimM"/>
</dbReference>
<dbReference type="InterPro" id="IPR011961">
    <property type="entry name" value="RimM"/>
</dbReference>
<dbReference type="InterPro" id="IPR002676">
    <property type="entry name" value="RimM_N"/>
</dbReference>
<dbReference type="InterPro" id="IPR036976">
    <property type="entry name" value="RimM_N_sf"/>
</dbReference>
<dbReference type="InterPro" id="IPR009000">
    <property type="entry name" value="Transl_B-barrel_sf"/>
</dbReference>
<dbReference type="NCBIfam" id="TIGR02273">
    <property type="entry name" value="16S_RimM"/>
    <property type="match status" value="1"/>
</dbReference>
<dbReference type="PANTHER" id="PTHR33692">
    <property type="entry name" value="RIBOSOME MATURATION FACTOR RIMM"/>
    <property type="match status" value="1"/>
</dbReference>
<dbReference type="PANTHER" id="PTHR33692:SF1">
    <property type="entry name" value="RIBOSOME MATURATION FACTOR RIMM"/>
    <property type="match status" value="1"/>
</dbReference>
<dbReference type="Pfam" id="PF24986">
    <property type="entry name" value="PRC_RimM"/>
    <property type="match status" value="1"/>
</dbReference>
<dbReference type="Pfam" id="PF01782">
    <property type="entry name" value="RimM"/>
    <property type="match status" value="1"/>
</dbReference>
<dbReference type="SUPFAM" id="SSF50346">
    <property type="entry name" value="PRC-barrel domain"/>
    <property type="match status" value="1"/>
</dbReference>
<dbReference type="SUPFAM" id="SSF50447">
    <property type="entry name" value="Translation proteins"/>
    <property type="match status" value="1"/>
</dbReference>
<name>RIMM_NOCFA</name>
<proteinExistence type="inferred from homology"/>
<reference key="1">
    <citation type="journal article" date="2004" name="Proc. Natl. Acad. Sci. U.S.A.">
        <title>The complete genomic sequence of Nocardia farcinica IFM 10152.</title>
        <authorList>
            <person name="Ishikawa J."/>
            <person name="Yamashita A."/>
            <person name="Mikami Y."/>
            <person name="Hoshino Y."/>
            <person name="Kurita H."/>
            <person name="Hotta K."/>
            <person name="Shiba T."/>
            <person name="Hattori M."/>
        </authorList>
    </citation>
    <scope>NUCLEOTIDE SEQUENCE [LARGE SCALE GENOMIC DNA]</scope>
    <source>
        <strain>IFM 10152</strain>
    </source>
</reference>
<comment type="function">
    <text evidence="1">An accessory protein needed during the final step in the assembly of 30S ribosomal subunit, possibly for assembly of the head region. Essential for efficient processing of 16S rRNA. May be needed both before and after RbfA during the maturation of 16S rRNA. It has affinity for free ribosomal 30S subunits but not for 70S ribosomes.</text>
</comment>
<comment type="subunit">
    <text evidence="1">Binds ribosomal protein uS19.</text>
</comment>
<comment type="subcellular location">
    <subcellularLocation>
        <location evidence="1">Cytoplasm</location>
    </subcellularLocation>
</comment>
<comment type="domain">
    <text evidence="1">The PRC barrel domain binds ribosomal protein uS19.</text>
</comment>
<comment type="similarity">
    <text evidence="1">Belongs to the RimM family.</text>
</comment>
<evidence type="ECO:0000255" key="1">
    <source>
        <dbReference type="HAMAP-Rule" id="MF_00014"/>
    </source>
</evidence>
<protein>
    <recommendedName>
        <fullName evidence="1">Ribosome maturation factor RimM</fullName>
    </recommendedName>
</protein>
<feature type="chain" id="PRO_0000163325" description="Ribosome maturation factor RimM">
    <location>
        <begin position="1"/>
        <end position="174"/>
    </location>
</feature>
<feature type="domain" description="PRC barrel" evidence="1">
    <location>
        <begin position="96"/>
        <end position="170"/>
    </location>
</feature>
<accession>Q5YS37</accession>
<gene>
    <name evidence="1" type="primary">rimM</name>
    <name type="ordered locus">NFA_41550</name>
</gene>